<reference evidence="3 4" key="1">
    <citation type="journal article" date="2004" name="Acta Biochim. Biophys. Sin.">
        <title>Molecular characterization of a new lectin from the marine alga Ulva pertusa.</title>
        <authorList>
            <person name="Wang S."/>
            <person name="Zhong F.-D."/>
            <person name="Zhang Y.-J."/>
            <person name="Wu Z.-J."/>
            <person name="Lin Q.-Y."/>
            <person name="Xie L.-H."/>
        </authorList>
    </citation>
    <scope>NUCLEOTIDE SEQUENCE [MRNA]</scope>
    <scope>PROTEIN SEQUENCE OF 54-73</scope>
    <scope>FUNCTION</scope>
    <scope>BIOPHYSICOCHEMICAL PROPERTIES</scope>
    <scope>SUBUNIT</scope>
    <scope>CALCIUM REQUIREMENT</scope>
</reference>
<organism>
    <name type="scientific">Ulva pertusa</name>
    <name type="common">Sea lettuce</name>
    <dbReference type="NCBI Taxonomy" id="3120"/>
    <lineage>
        <taxon>Eukaryota</taxon>
        <taxon>Viridiplantae</taxon>
        <taxon>Chlorophyta</taxon>
        <taxon>Ulvophyceae</taxon>
        <taxon>OUU clade</taxon>
        <taxon>Ulvales</taxon>
        <taxon>Ulvaceae</taxon>
        <taxon>Ulva</taxon>
    </lineage>
</organism>
<evidence type="ECO:0000255" key="1"/>
<evidence type="ECO:0000269" key="2">
    <source>
    </source>
</evidence>
<evidence type="ECO:0000305" key="3"/>
<evidence type="ECO:0000312" key="4">
    <source>
        <dbReference type="EMBL" id="AAR32648.1"/>
    </source>
</evidence>
<gene>
    <name type="primary">UPL1</name>
</gene>
<dbReference type="EMBL" id="AY433960">
    <property type="protein sequence ID" value="AAR32648.1"/>
    <property type="molecule type" value="mRNA"/>
</dbReference>
<dbReference type="GO" id="GO:0030246">
    <property type="term" value="F:carbohydrate binding"/>
    <property type="evidence" value="ECO:0007669"/>
    <property type="project" value="UniProtKB-KW"/>
</dbReference>
<comment type="function">
    <text evidence="2">N-acetyl-D-glucosamine-specific lectin. Specifically agglutinates rabbit erythrocytes.</text>
</comment>
<comment type="biophysicochemical properties">
    <phDependence>
        <text evidence="2">Optimum pH is 6.0-8.0. No activity below pH 3.0 or above pH 11.0.</text>
    </phDependence>
    <temperatureDependence>
        <text evidence="2">Thermostable. Activity unaffected after incubation for 30 minutes at 30-70 degrees Celsius. Retains 50% of its maximal activity after incubation at 80 degrees Celsius for 30 minutes.</text>
    </temperatureDependence>
</comment>
<comment type="subunit">
    <text evidence="2">Monomer.</text>
</comment>
<comment type="miscellaneous">
    <text evidence="2">Divalent cations are required for ligand binding. Calcium is the most effective, but manganese or zinc can also be used to a lesser extent.</text>
</comment>
<name>LEC_ULVPE</name>
<keyword id="KW-0903">Direct protein sequencing</keyword>
<keyword id="KW-0348">Hemagglutinin</keyword>
<keyword id="KW-0430">Lectin</keyword>
<keyword id="KW-0732">Signal</keyword>
<feature type="signal peptide" evidence="1">
    <location>
        <begin position="1"/>
        <end position="20"/>
    </location>
</feature>
<feature type="propeptide" id="PRO_0000271419" evidence="1 2">
    <location>
        <begin position="21"/>
        <end position="53"/>
    </location>
</feature>
<feature type="chain" id="PRO_0000271420" description="Lectin" evidence="2">
    <location>
        <begin position="54"/>
        <end position="203"/>
    </location>
</feature>
<proteinExistence type="evidence at protein level"/>
<protein>
    <recommendedName>
        <fullName>Lectin</fullName>
    </recommendedName>
</protein>
<sequence length="203" mass="22195">MINILHVIAGLALASVGVDARQVGVGADVLHAVENTIDSITGVEASHSALEVGGGITNTDNWETFAGLPLTGAIKVNDGNSVVHISAYFPEDRRGKYSYYAATSDELQKTVVFLFVVEDDGLLLQAVKNNAHYPVTNGMYLASHRYYPKDSKYEGMVRLMVHADPAKAVIWEFVTVGGKQYLKVKENRDYTALQIPRHHPRPG</sequence>
<accession>Q6T6H8</accession>
<accession>P83209</accession>